<sequence length="921" mass="103378">MDAPATASRQPIAEEPRMSQESSLSTVSTTSLVFDRLHEHNEKSYHSSSQRRRAPSASRGGYADHPDDDDDDDESYKEADTNDLETGPFLAPASVMMRRVGVDRGLKKVILILAAAFLFAWGAALFVFLSNKSYKHASTIDHDPSATSRGSGKPVTLDQVISGFWYPTSHSISWIEGPNGEDGLLLEQGARGKDYLVVEDVRSGNKDSQVSANVVQSRTLMKNPWINVGGRQLAPSDTRPSKDMKKVLVSTDRQRNWRYSYTALYWIFDVETQTAEALDPEHPDGRVQLATWSPQSNAIVFTRDNNLFLRKLDGDKKVTQITNDGGPEYFYGIPDWVYEEEVFATNSATWYSEDGKYVAFLRTNETGVPEYPLQYFLSRPSGKEKPPGEETYPDEKRIKYPRAGSHNPVVDLLFFDVERGDVFSVDIDGGFADDDRLINMVLWANDKVLIKETNRVSDIMRVVLVDVVARTGKTVNTIDVGELDGGWFEISHTTQFIPADPANGRPQDGYIDTVVHGNGDHIAYFSPMDNAEPVYLTGGDWEVDDGPSAVDLKNNLVYFVATKESSIQRHVYSVHLNRSDLKPFTDTKFESYYDISFSSGAGYALLSYQGPKIPWQKVVSTPSSPVSYEHVVEKNEDLAENAKKYELPILNYGTLKVDGVELNYVERRPPHFDEKKKYPVLFQQYSGPGSQSVHKKFAVDFQSYVASALGYLVVTVDGRGTGFIGRKNRVLIRDHLGYWEAHDQIAAAQAWAAKKYVDPARIAIWGWSYGGFNTLKTLEMDAGRTFSYGMAVAPVTDWRFYDSIYTERYMRTPQLNPSGYDQTAVSNVSALAGNVRWLMMHGVGDDNVHYQNTLTLLDKLDLNGIENYDVHVFPDSDHGIYFHGANRIVYDKLSNWLINAFNGEWLKVAGAKPIVEPKARV</sequence>
<accession>E3QKD2</accession>
<organism>
    <name type="scientific">Colletotrichum graminicola (strain M1.001 / M2 / FGSC 10212)</name>
    <name type="common">Maize anthracnose fungus</name>
    <name type="synonym">Glomerella graminicola</name>
    <dbReference type="NCBI Taxonomy" id="645133"/>
    <lineage>
        <taxon>Eukaryota</taxon>
        <taxon>Fungi</taxon>
        <taxon>Dikarya</taxon>
        <taxon>Ascomycota</taxon>
        <taxon>Pezizomycotina</taxon>
        <taxon>Sordariomycetes</taxon>
        <taxon>Hypocreomycetidae</taxon>
        <taxon>Glomerellales</taxon>
        <taxon>Glomerellaceae</taxon>
        <taxon>Colletotrichum</taxon>
        <taxon>Colletotrichum graminicola species complex</taxon>
    </lineage>
</organism>
<gene>
    <name type="primary">DAPB</name>
    <name type="ORF">GLRG_06464</name>
</gene>
<name>DAPB_COLGM</name>
<evidence type="ECO:0000250" key="1"/>
<evidence type="ECO:0000255" key="2"/>
<evidence type="ECO:0000256" key="3">
    <source>
        <dbReference type="SAM" id="MobiDB-lite"/>
    </source>
</evidence>
<evidence type="ECO:0000305" key="4"/>
<dbReference type="EC" id="3.4.14.5"/>
<dbReference type="EMBL" id="GG697354">
    <property type="protein sequence ID" value="EFQ31320.1"/>
    <property type="molecule type" value="Genomic_DNA"/>
</dbReference>
<dbReference type="RefSeq" id="XP_008095340.1">
    <property type="nucleotide sequence ID" value="XM_008097149.1"/>
</dbReference>
<dbReference type="SMR" id="E3QKD2"/>
<dbReference type="STRING" id="645133.E3QKD2"/>
<dbReference type="ESTHER" id="colgm-dapb">
    <property type="family name" value="DPP4N_Peptidase_S9"/>
</dbReference>
<dbReference type="GlyCosmos" id="E3QKD2">
    <property type="glycosylation" value="4 sites, No reported glycans"/>
</dbReference>
<dbReference type="EnsemblFungi" id="EFQ31320">
    <property type="protein sequence ID" value="EFQ31320"/>
    <property type="gene ID" value="GLRG_06464"/>
</dbReference>
<dbReference type="GeneID" id="24411829"/>
<dbReference type="VEuPathDB" id="FungiDB:GLRG_06464"/>
<dbReference type="eggNOG" id="KOG2100">
    <property type="taxonomic scope" value="Eukaryota"/>
</dbReference>
<dbReference type="HOGENOM" id="CLU_006105_0_1_1"/>
<dbReference type="OrthoDB" id="16520at2759"/>
<dbReference type="Proteomes" id="UP000008782">
    <property type="component" value="Unassembled WGS sequence"/>
</dbReference>
<dbReference type="GO" id="GO:0000329">
    <property type="term" value="C:fungal-type vacuole membrane"/>
    <property type="evidence" value="ECO:0007669"/>
    <property type="project" value="EnsemblFungi"/>
</dbReference>
<dbReference type="GO" id="GO:0005886">
    <property type="term" value="C:plasma membrane"/>
    <property type="evidence" value="ECO:0007669"/>
    <property type="project" value="TreeGrafter"/>
</dbReference>
<dbReference type="GO" id="GO:0004177">
    <property type="term" value="F:aminopeptidase activity"/>
    <property type="evidence" value="ECO:0007669"/>
    <property type="project" value="UniProtKB-KW"/>
</dbReference>
<dbReference type="GO" id="GO:0008239">
    <property type="term" value="F:dipeptidyl-peptidase activity"/>
    <property type="evidence" value="ECO:0007669"/>
    <property type="project" value="UniProtKB-EC"/>
</dbReference>
<dbReference type="GO" id="GO:0008236">
    <property type="term" value="F:serine-type peptidase activity"/>
    <property type="evidence" value="ECO:0007669"/>
    <property type="project" value="UniProtKB-KW"/>
</dbReference>
<dbReference type="GO" id="GO:0006508">
    <property type="term" value="P:proteolysis"/>
    <property type="evidence" value="ECO:0007669"/>
    <property type="project" value="UniProtKB-KW"/>
</dbReference>
<dbReference type="FunFam" id="3.40.50.1820:FF:000003">
    <property type="entry name" value="Dipeptidyl peptidase 4"/>
    <property type="match status" value="1"/>
</dbReference>
<dbReference type="Gene3D" id="3.40.50.1820">
    <property type="entry name" value="alpha/beta hydrolase"/>
    <property type="match status" value="1"/>
</dbReference>
<dbReference type="Gene3D" id="2.140.10.30">
    <property type="entry name" value="Dipeptidylpeptidase IV, N-terminal domain"/>
    <property type="match status" value="1"/>
</dbReference>
<dbReference type="InterPro" id="IPR029058">
    <property type="entry name" value="AB_hydrolase_fold"/>
</dbReference>
<dbReference type="InterPro" id="IPR001375">
    <property type="entry name" value="Peptidase_S9_cat"/>
</dbReference>
<dbReference type="InterPro" id="IPR002469">
    <property type="entry name" value="Peptidase_S9B_N"/>
</dbReference>
<dbReference type="InterPro" id="IPR050278">
    <property type="entry name" value="Serine_Prot_S9B/DPPIV"/>
</dbReference>
<dbReference type="PANTHER" id="PTHR11731:SF200">
    <property type="entry name" value="DIPEPTIDYL PEPTIDASE 10, ISOFORM B"/>
    <property type="match status" value="1"/>
</dbReference>
<dbReference type="PANTHER" id="PTHR11731">
    <property type="entry name" value="PROTEASE FAMILY S9B,C DIPEPTIDYL-PEPTIDASE IV-RELATED"/>
    <property type="match status" value="1"/>
</dbReference>
<dbReference type="Pfam" id="PF00930">
    <property type="entry name" value="DPPIV_N"/>
    <property type="match status" value="1"/>
</dbReference>
<dbReference type="Pfam" id="PF00326">
    <property type="entry name" value="Peptidase_S9"/>
    <property type="match status" value="1"/>
</dbReference>
<dbReference type="SUPFAM" id="SSF53474">
    <property type="entry name" value="alpha/beta-Hydrolases"/>
    <property type="match status" value="1"/>
</dbReference>
<dbReference type="SUPFAM" id="SSF82171">
    <property type="entry name" value="DPP6 N-terminal domain-like"/>
    <property type="match status" value="1"/>
</dbReference>
<proteinExistence type="inferred from homology"/>
<reference key="1">
    <citation type="journal article" date="2012" name="Nat. Genet.">
        <title>Lifestyle transitions in plant pathogenic Colletotrichum fungi deciphered by genome and transcriptome analyses.</title>
        <authorList>
            <person name="O'Connell R.J."/>
            <person name="Thon M.R."/>
            <person name="Hacquard S."/>
            <person name="Amyotte S.G."/>
            <person name="Kleemann J."/>
            <person name="Torres M.F."/>
            <person name="Damm U."/>
            <person name="Buiate E.A."/>
            <person name="Epstein L."/>
            <person name="Alkan N."/>
            <person name="Altmueller J."/>
            <person name="Alvarado-Balderrama L."/>
            <person name="Bauser C.A."/>
            <person name="Becker C."/>
            <person name="Birren B.W."/>
            <person name="Chen Z."/>
            <person name="Choi J."/>
            <person name="Crouch J.A."/>
            <person name="Duvick J.P."/>
            <person name="Farman M.A."/>
            <person name="Gan P."/>
            <person name="Heiman D."/>
            <person name="Henrissat B."/>
            <person name="Howard R.J."/>
            <person name="Kabbage M."/>
            <person name="Koch C."/>
            <person name="Kracher B."/>
            <person name="Kubo Y."/>
            <person name="Law A.D."/>
            <person name="Lebrun M.-H."/>
            <person name="Lee Y.-H."/>
            <person name="Miyara I."/>
            <person name="Moore N."/>
            <person name="Neumann U."/>
            <person name="Nordstroem K."/>
            <person name="Panaccione D.G."/>
            <person name="Panstruga R."/>
            <person name="Place M."/>
            <person name="Proctor R.H."/>
            <person name="Prusky D."/>
            <person name="Rech G."/>
            <person name="Reinhardt R."/>
            <person name="Rollins J.A."/>
            <person name="Rounsley S."/>
            <person name="Schardl C.L."/>
            <person name="Schwartz D.C."/>
            <person name="Shenoy N."/>
            <person name="Shirasu K."/>
            <person name="Sikhakolli U.R."/>
            <person name="Stueber K."/>
            <person name="Sukno S.A."/>
            <person name="Sweigard J.A."/>
            <person name="Takano Y."/>
            <person name="Takahara H."/>
            <person name="Trail F."/>
            <person name="van der Does H.C."/>
            <person name="Voll L.M."/>
            <person name="Will I."/>
            <person name="Young S."/>
            <person name="Zeng Q."/>
            <person name="Zhang J."/>
            <person name="Zhou S."/>
            <person name="Dickman M.B."/>
            <person name="Schulze-Lefert P."/>
            <person name="Ver Loren van Themaat E."/>
            <person name="Ma L.-J."/>
            <person name="Vaillancourt L.J."/>
        </authorList>
    </citation>
    <scope>NUCLEOTIDE SEQUENCE [LARGE SCALE GENOMIC DNA]</scope>
    <source>
        <strain>M1.001 / M2 / FGSC 10212</strain>
    </source>
</reference>
<feature type="chain" id="PRO_0000412144" description="Probable dipeptidyl-aminopeptidase B">
    <location>
        <begin position="1"/>
        <end position="921"/>
    </location>
</feature>
<feature type="topological domain" description="Cytoplasmic" evidence="2">
    <location>
        <begin position="1"/>
        <end position="108"/>
    </location>
</feature>
<feature type="transmembrane region" description="Helical; Signal-anchor for type II membrane protein" evidence="2">
    <location>
        <begin position="109"/>
        <end position="129"/>
    </location>
</feature>
<feature type="topological domain" description="Vacuolar" evidence="2">
    <location>
        <begin position="130"/>
        <end position="921"/>
    </location>
</feature>
<feature type="region of interest" description="Disordered" evidence="3">
    <location>
        <begin position="1"/>
        <end position="87"/>
    </location>
</feature>
<feature type="compositionally biased region" description="Low complexity" evidence="3">
    <location>
        <begin position="22"/>
        <end position="33"/>
    </location>
</feature>
<feature type="compositionally biased region" description="Basic and acidic residues" evidence="3">
    <location>
        <begin position="35"/>
        <end position="45"/>
    </location>
</feature>
<feature type="compositionally biased region" description="Acidic residues" evidence="3">
    <location>
        <begin position="66"/>
        <end position="75"/>
    </location>
</feature>
<feature type="active site" description="Charge relay system" evidence="1">
    <location>
        <position position="768"/>
    </location>
</feature>
<feature type="active site" description="Charge relay system" evidence="1">
    <location>
        <position position="845"/>
    </location>
</feature>
<feature type="active site" description="Charge relay system" evidence="1">
    <location>
        <position position="878"/>
    </location>
</feature>
<feature type="glycosylation site" description="N-linked (GlcNAc...) asparagine" evidence="2">
    <location>
        <position position="131"/>
    </location>
</feature>
<feature type="glycosylation site" description="N-linked (GlcNAc...) asparagine" evidence="2">
    <location>
        <position position="364"/>
    </location>
</feature>
<feature type="glycosylation site" description="N-linked (GlcNAc...) asparagine" evidence="2">
    <location>
        <position position="577"/>
    </location>
</feature>
<feature type="glycosylation site" description="N-linked (GlcNAc...) asparagine" evidence="2">
    <location>
        <position position="827"/>
    </location>
</feature>
<keyword id="KW-0031">Aminopeptidase</keyword>
<keyword id="KW-0325">Glycoprotein</keyword>
<keyword id="KW-0378">Hydrolase</keyword>
<keyword id="KW-0472">Membrane</keyword>
<keyword id="KW-0645">Protease</keyword>
<keyword id="KW-1185">Reference proteome</keyword>
<keyword id="KW-0720">Serine protease</keyword>
<keyword id="KW-0735">Signal-anchor</keyword>
<keyword id="KW-0812">Transmembrane</keyword>
<keyword id="KW-1133">Transmembrane helix</keyword>
<keyword id="KW-0926">Vacuole</keyword>
<protein>
    <recommendedName>
        <fullName>Probable dipeptidyl-aminopeptidase B</fullName>
        <shortName>DPAP B</shortName>
        <ecNumber>3.4.14.5</ecNumber>
    </recommendedName>
</protein>
<comment type="function">
    <text evidence="1">Type IV dipeptidyl-peptidase which removes N-terminal dipeptides sequentially from polypeptides having unsubstituted N-termini provided that the penultimate residue is proline.</text>
</comment>
<comment type="catalytic activity">
    <reaction>
        <text>Release of an N-terminal dipeptide, Xaa-Yaa-|-Zaa-, from a polypeptide, preferentially when Yaa is Pro, provided Zaa is neither Pro nor hydroxyproline.</text>
        <dbReference type="EC" id="3.4.14.5"/>
    </reaction>
</comment>
<comment type="subcellular location">
    <subcellularLocation>
        <location evidence="1">Vacuole membrane</location>
        <topology evidence="1">Single-pass type II membrane protein</topology>
    </subcellularLocation>
    <text evidence="1">Lysosome-like vacuoles.</text>
</comment>
<comment type="similarity">
    <text evidence="4">Belongs to the peptidase S9B family.</text>
</comment>